<feature type="chain" id="PRO_0000267905" description="Large ribosomal subunit protein bL17">
    <location>
        <begin position="1"/>
        <end position="141"/>
    </location>
</feature>
<feature type="region of interest" description="Disordered" evidence="2">
    <location>
        <begin position="120"/>
        <end position="141"/>
    </location>
</feature>
<gene>
    <name evidence="1" type="primary">rplQ</name>
    <name type="ordered locus">Saro_2526</name>
</gene>
<evidence type="ECO:0000255" key="1">
    <source>
        <dbReference type="HAMAP-Rule" id="MF_01368"/>
    </source>
</evidence>
<evidence type="ECO:0000256" key="2">
    <source>
        <dbReference type="SAM" id="MobiDB-lite"/>
    </source>
</evidence>
<evidence type="ECO:0000305" key="3"/>
<dbReference type="EMBL" id="CP000248">
    <property type="protein sequence ID" value="ABD26962.1"/>
    <property type="molecule type" value="Genomic_DNA"/>
</dbReference>
<dbReference type="RefSeq" id="WP_011446168.1">
    <property type="nucleotide sequence ID" value="NC_007794.1"/>
</dbReference>
<dbReference type="SMR" id="Q2G5B1"/>
<dbReference type="STRING" id="279238.Saro_2526"/>
<dbReference type="KEGG" id="nar:Saro_2526"/>
<dbReference type="eggNOG" id="COG0203">
    <property type="taxonomic scope" value="Bacteria"/>
</dbReference>
<dbReference type="HOGENOM" id="CLU_074407_2_0_5"/>
<dbReference type="Proteomes" id="UP000009134">
    <property type="component" value="Chromosome"/>
</dbReference>
<dbReference type="GO" id="GO:0022625">
    <property type="term" value="C:cytosolic large ribosomal subunit"/>
    <property type="evidence" value="ECO:0007669"/>
    <property type="project" value="TreeGrafter"/>
</dbReference>
<dbReference type="GO" id="GO:0003735">
    <property type="term" value="F:structural constituent of ribosome"/>
    <property type="evidence" value="ECO:0007669"/>
    <property type="project" value="InterPro"/>
</dbReference>
<dbReference type="GO" id="GO:0006412">
    <property type="term" value="P:translation"/>
    <property type="evidence" value="ECO:0007669"/>
    <property type="project" value="UniProtKB-UniRule"/>
</dbReference>
<dbReference type="FunFam" id="3.90.1030.10:FF:000001">
    <property type="entry name" value="50S ribosomal protein L17"/>
    <property type="match status" value="1"/>
</dbReference>
<dbReference type="Gene3D" id="3.90.1030.10">
    <property type="entry name" value="Ribosomal protein L17"/>
    <property type="match status" value="1"/>
</dbReference>
<dbReference type="HAMAP" id="MF_01368">
    <property type="entry name" value="Ribosomal_bL17"/>
    <property type="match status" value="1"/>
</dbReference>
<dbReference type="InterPro" id="IPR000456">
    <property type="entry name" value="Ribosomal_bL17"/>
</dbReference>
<dbReference type="InterPro" id="IPR047859">
    <property type="entry name" value="Ribosomal_bL17_CS"/>
</dbReference>
<dbReference type="InterPro" id="IPR036373">
    <property type="entry name" value="Ribosomal_bL17_sf"/>
</dbReference>
<dbReference type="NCBIfam" id="TIGR00059">
    <property type="entry name" value="L17"/>
    <property type="match status" value="1"/>
</dbReference>
<dbReference type="PANTHER" id="PTHR14413:SF16">
    <property type="entry name" value="LARGE RIBOSOMAL SUBUNIT PROTEIN BL17M"/>
    <property type="match status" value="1"/>
</dbReference>
<dbReference type="PANTHER" id="PTHR14413">
    <property type="entry name" value="RIBOSOMAL PROTEIN L17"/>
    <property type="match status" value="1"/>
</dbReference>
<dbReference type="Pfam" id="PF01196">
    <property type="entry name" value="Ribosomal_L17"/>
    <property type="match status" value="1"/>
</dbReference>
<dbReference type="SUPFAM" id="SSF64263">
    <property type="entry name" value="Prokaryotic ribosomal protein L17"/>
    <property type="match status" value="1"/>
</dbReference>
<dbReference type="PROSITE" id="PS01167">
    <property type="entry name" value="RIBOSOMAL_L17"/>
    <property type="match status" value="1"/>
</dbReference>
<keyword id="KW-1185">Reference proteome</keyword>
<keyword id="KW-0687">Ribonucleoprotein</keyword>
<keyword id="KW-0689">Ribosomal protein</keyword>
<sequence>MRHKLGQRKLGRTSSHRIALLRNMAAALIKHEQITTTLPKARELRPYLEKLITLGKKGGLSNRRLAHARLLDEAQEQKLFTTLAERYADRNGGYTRIIKAGYRASDAAPLAVIELVDRDTSAKGQDSGPVLTADEDEFEAA</sequence>
<reference key="1">
    <citation type="submission" date="2006-01" db="EMBL/GenBank/DDBJ databases">
        <title>Complete sequence of Novosphingobium aromaticivorans DSM 12444.</title>
        <authorList>
            <consortium name="US DOE Joint Genome Institute"/>
            <person name="Copeland A."/>
            <person name="Lucas S."/>
            <person name="Lapidus A."/>
            <person name="Barry K."/>
            <person name="Detter J.C."/>
            <person name="Glavina T."/>
            <person name="Hammon N."/>
            <person name="Israni S."/>
            <person name="Pitluck S."/>
            <person name="Chain P."/>
            <person name="Malfatti S."/>
            <person name="Shin M."/>
            <person name="Vergez L."/>
            <person name="Schmutz J."/>
            <person name="Larimer F."/>
            <person name="Land M."/>
            <person name="Kyrpides N."/>
            <person name="Ivanova N."/>
            <person name="Fredrickson J."/>
            <person name="Balkwill D."/>
            <person name="Romine M.F."/>
            <person name="Richardson P."/>
        </authorList>
    </citation>
    <scope>NUCLEOTIDE SEQUENCE [LARGE SCALE GENOMIC DNA]</scope>
    <source>
        <strain>ATCC 700278 / DSM 12444 / CCUG 56034 / CIP 105152 / NBRC 16084 / F199</strain>
    </source>
</reference>
<comment type="subunit">
    <text evidence="1">Part of the 50S ribosomal subunit. Contacts protein L32.</text>
</comment>
<comment type="similarity">
    <text evidence="1">Belongs to the bacterial ribosomal protein bL17 family.</text>
</comment>
<protein>
    <recommendedName>
        <fullName evidence="1">Large ribosomal subunit protein bL17</fullName>
    </recommendedName>
    <alternativeName>
        <fullName evidence="3">50S ribosomal protein L17</fullName>
    </alternativeName>
</protein>
<name>RL17_NOVAD</name>
<organism>
    <name type="scientific">Novosphingobium aromaticivorans (strain ATCC 700278 / DSM 12444 / CCUG 56034 / CIP 105152 / NBRC 16084 / F199)</name>
    <dbReference type="NCBI Taxonomy" id="279238"/>
    <lineage>
        <taxon>Bacteria</taxon>
        <taxon>Pseudomonadati</taxon>
        <taxon>Pseudomonadota</taxon>
        <taxon>Alphaproteobacteria</taxon>
        <taxon>Sphingomonadales</taxon>
        <taxon>Sphingomonadaceae</taxon>
        <taxon>Novosphingobium</taxon>
    </lineage>
</organism>
<accession>Q2G5B1</accession>
<proteinExistence type="inferred from homology"/>